<proteinExistence type="inferred from homology"/>
<name>IF2_STRP4</name>
<feature type="chain" id="PRO_1000093831" description="Translation initiation factor IF-2">
    <location>
        <begin position="1"/>
        <end position="930"/>
    </location>
</feature>
<feature type="domain" description="tr-type G">
    <location>
        <begin position="432"/>
        <end position="599"/>
    </location>
</feature>
<feature type="region of interest" description="Disordered" evidence="3">
    <location>
        <begin position="50"/>
        <end position="196"/>
    </location>
</feature>
<feature type="region of interest" description="Disordered" evidence="3">
    <location>
        <begin position="260"/>
        <end position="346"/>
    </location>
</feature>
<feature type="region of interest" description="G1" evidence="1">
    <location>
        <begin position="441"/>
        <end position="448"/>
    </location>
</feature>
<feature type="region of interest" description="G2" evidence="1">
    <location>
        <begin position="466"/>
        <end position="470"/>
    </location>
</feature>
<feature type="region of interest" description="G3" evidence="1">
    <location>
        <begin position="487"/>
        <end position="490"/>
    </location>
</feature>
<feature type="region of interest" description="G4" evidence="1">
    <location>
        <begin position="541"/>
        <end position="544"/>
    </location>
</feature>
<feature type="region of interest" description="G5" evidence="1">
    <location>
        <begin position="577"/>
        <end position="579"/>
    </location>
</feature>
<feature type="compositionally biased region" description="Low complexity" evidence="3">
    <location>
        <begin position="50"/>
        <end position="67"/>
    </location>
</feature>
<feature type="compositionally biased region" description="Basic and acidic residues" evidence="3">
    <location>
        <begin position="68"/>
        <end position="90"/>
    </location>
</feature>
<feature type="compositionally biased region" description="Basic and acidic residues" evidence="3">
    <location>
        <begin position="110"/>
        <end position="125"/>
    </location>
</feature>
<feature type="compositionally biased region" description="Low complexity" evidence="3">
    <location>
        <begin position="129"/>
        <end position="141"/>
    </location>
</feature>
<feature type="compositionally biased region" description="Basic and acidic residues" evidence="3">
    <location>
        <begin position="157"/>
        <end position="172"/>
    </location>
</feature>
<feature type="compositionally biased region" description="Basic and acidic residues" evidence="3">
    <location>
        <begin position="262"/>
        <end position="295"/>
    </location>
</feature>
<feature type="compositionally biased region" description="Low complexity" evidence="3">
    <location>
        <begin position="309"/>
        <end position="318"/>
    </location>
</feature>
<feature type="compositionally biased region" description="Basic and acidic residues" evidence="3">
    <location>
        <begin position="337"/>
        <end position="346"/>
    </location>
</feature>
<feature type="binding site" evidence="2">
    <location>
        <begin position="441"/>
        <end position="448"/>
    </location>
    <ligand>
        <name>GTP</name>
        <dbReference type="ChEBI" id="CHEBI:37565"/>
    </ligand>
</feature>
<feature type="binding site" evidence="2">
    <location>
        <begin position="487"/>
        <end position="491"/>
    </location>
    <ligand>
        <name>GTP</name>
        <dbReference type="ChEBI" id="CHEBI:37565"/>
    </ligand>
</feature>
<feature type="binding site" evidence="2">
    <location>
        <begin position="541"/>
        <end position="544"/>
    </location>
    <ligand>
        <name>GTP</name>
        <dbReference type="ChEBI" id="CHEBI:37565"/>
    </ligand>
</feature>
<reference key="1">
    <citation type="journal article" date="2001" name="Microb. Drug Resist.">
        <title>Annotated draft genomic sequence from a Streptococcus pneumoniae type 19F clinical isolate.</title>
        <authorList>
            <person name="Dopazo J."/>
            <person name="Mendoza A."/>
            <person name="Herrero J."/>
            <person name="Caldara F."/>
            <person name="Humbert Y."/>
            <person name="Friedli L."/>
            <person name="Guerrier M."/>
            <person name="Grand-Schenk E."/>
            <person name="Gandin C."/>
            <person name="de Francesco M."/>
            <person name="Polissi A."/>
            <person name="Buell G."/>
            <person name="Feger G."/>
            <person name="Garcia E."/>
            <person name="Peitsch M."/>
            <person name="Garcia-Bustos J.F."/>
        </authorList>
    </citation>
    <scope>NUCLEOTIDE SEQUENCE [LARGE SCALE GENOMIC DNA]</scope>
    <source>
        <strain>G54</strain>
    </source>
</reference>
<reference key="2">
    <citation type="submission" date="2008-03" db="EMBL/GenBank/DDBJ databases">
        <title>Pneumococcal beta glucoside metabolism investigated by whole genome comparison.</title>
        <authorList>
            <person name="Mulas L."/>
            <person name="Trappetti C."/>
            <person name="Hakenbeck R."/>
            <person name="Iannelli F."/>
            <person name="Pozzi G."/>
            <person name="Davidsen T.M."/>
            <person name="Tettelin H."/>
            <person name="Oggioni M."/>
        </authorList>
    </citation>
    <scope>NUCLEOTIDE SEQUENCE [LARGE SCALE GENOMIC DNA]</scope>
    <source>
        <strain>G54</strain>
    </source>
</reference>
<protein>
    <recommendedName>
        <fullName evidence="2">Translation initiation factor IF-2</fullName>
    </recommendedName>
</protein>
<organism>
    <name type="scientific">Streptococcus pneumoniae serotype 19F (strain G54)</name>
    <dbReference type="NCBI Taxonomy" id="512566"/>
    <lineage>
        <taxon>Bacteria</taxon>
        <taxon>Bacillati</taxon>
        <taxon>Bacillota</taxon>
        <taxon>Bacilli</taxon>
        <taxon>Lactobacillales</taxon>
        <taxon>Streptococcaceae</taxon>
        <taxon>Streptococcus</taxon>
    </lineage>
</organism>
<gene>
    <name evidence="2" type="primary">infB</name>
    <name type="ordered locus">SPG_0502</name>
</gene>
<evidence type="ECO:0000250" key="1"/>
<evidence type="ECO:0000255" key="2">
    <source>
        <dbReference type="HAMAP-Rule" id="MF_00100"/>
    </source>
</evidence>
<evidence type="ECO:0000256" key="3">
    <source>
        <dbReference type="SAM" id="MobiDB-lite"/>
    </source>
</evidence>
<keyword id="KW-0963">Cytoplasm</keyword>
<keyword id="KW-0342">GTP-binding</keyword>
<keyword id="KW-0396">Initiation factor</keyword>
<keyword id="KW-0547">Nucleotide-binding</keyword>
<keyword id="KW-0648">Protein biosynthesis</keyword>
<dbReference type="EMBL" id="CP001015">
    <property type="protein sequence ID" value="ACF56844.1"/>
    <property type="molecule type" value="Genomic_DNA"/>
</dbReference>
<dbReference type="SMR" id="B5E266"/>
<dbReference type="KEGG" id="spx:SPG_0502"/>
<dbReference type="HOGENOM" id="CLU_006301_5_0_9"/>
<dbReference type="GO" id="GO:0005829">
    <property type="term" value="C:cytosol"/>
    <property type="evidence" value="ECO:0007669"/>
    <property type="project" value="TreeGrafter"/>
</dbReference>
<dbReference type="GO" id="GO:0005525">
    <property type="term" value="F:GTP binding"/>
    <property type="evidence" value="ECO:0007669"/>
    <property type="project" value="UniProtKB-KW"/>
</dbReference>
<dbReference type="GO" id="GO:0003924">
    <property type="term" value="F:GTPase activity"/>
    <property type="evidence" value="ECO:0007669"/>
    <property type="project" value="UniProtKB-UniRule"/>
</dbReference>
<dbReference type="GO" id="GO:0003743">
    <property type="term" value="F:translation initiation factor activity"/>
    <property type="evidence" value="ECO:0007669"/>
    <property type="project" value="UniProtKB-UniRule"/>
</dbReference>
<dbReference type="CDD" id="cd01887">
    <property type="entry name" value="IF2_eIF5B"/>
    <property type="match status" value="1"/>
</dbReference>
<dbReference type="CDD" id="cd03702">
    <property type="entry name" value="IF2_mtIF2_II"/>
    <property type="match status" value="1"/>
</dbReference>
<dbReference type="CDD" id="cd03692">
    <property type="entry name" value="mtIF2_IVc"/>
    <property type="match status" value="1"/>
</dbReference>
<dbReference type="FunFam" id="1.10.10.2480:FF:000003">
    <property type="entry name" value="Translation initiation factor IF-2"/>
    <property type="match status" value="1"/>
</dbReference>
<dbReference type="FunFam" id="2.40.30.10:FF:000007">
    <property type="entry name" value="Translation initiation factor IF-2"/>
    <property type="match status" value="1"/>
</dbReference>
<dbReference type="FunFam" id="2.40.30.10:FF:000008">
    <property type="entry name" value="Translation initiation factor IF-2"/>
    <property type="match status" value="1"/>
</dbReference>
<dbReference type="FunFam" id="3.40.50.10050:FF:000001">
    <property type="entry name" value="Translation initiation factor IF-2"/>
    <property type="match status" value="1"/>
</dbReference>
<dbReference type="FunFam" id="3.40.50.300:FF:000019">
    <property type="entry name" value="Translation initiation factor IF-2"/>
    <property type="match status" value="1"/>
</dbReference>
<dbReference type="Gene3D" id="1.10.10.2480">
    <property type="match status" value="1"/>
</dbReference>
<dbReference type="Gene3D" id="3.40.50.300">
    <property type="entry name" value="P-loop containing nucleotide triphosphate hydrolases"/>
    <property type="match status" value="1"/>
</dbReference>
<dbReference type="Gene3D" id="2.40.30.10">
    <property type="entry name" value="Translation factors"/>
    <property type="match status" value="2"/>
</dbReference>
<dbReference type="Gene3D" id="3.40.50.10050">
    <property type="entry name" value="Translation initiation factor IF- 2, domain 3"/>
    <property type="match status" value="1"/>
</dbReference>
<dbReference type="HAMAP" id="MF_00100_B">
    <property type="entry name" value="IF_2_B"/>
    <property type="match status" value="1"/>
</dbReference>
<dbReference type="InterPro" id="IPR053905">
    <property type="entry name" value="EF-G-like_DII"/>
</dbReference>
<dbReference type="InterPro" id="IPR044145">
    <property type="entry name" value="IF2_II"/>
</dbReference>
<dbReference type="InterPro" id="IPR006847">
    <property type="entry name" value="IF2_N"/>
</dbReference>
<dbReference type="InterPro" id="IPR027417">
    <property type="entry name" value="P-loop_NTPase"/>
</dbReference>
<dbReference type="InterPro" id="IPR005225">
    <property type="entry name" value="Small_GTP-bd"/>
</dbReference>
<dbReference type="InterPro" id="IPR000795">
    <property type="entry name" value="T_Tr_GTP-bd_dom"/>
</dbReference>
<dbReference type="InterPro" id="IPR000178">
    <property type="entry name" value="TF_IF2_bacterial-like"/>
</dbReference>
<dbReference type="InterPro" id="IPR015760">
    <property type="entry name" value="TIF_IF2"/>
</dbReference>
<dbReference type="InterPro" id="IPR023115">
    <property type="entry name" value="TIF_IF2_dom3"/>
</dbReference>
<dbReference type="InterPro" id="IPR036925">
    <property type="entry name" value="TIF_IF2_dom3_sf"/>
</dbReference>
<dbReference type="InterPro" id="IPR009000">
    <property type="entry name" value="Transl_B-barrel_sf"/>
</dbReference>
<dbReference type="NCBIfam" id="TIGR00487">
    <property type="entry name" value="IF-2"/>
    <property type="match status" value="1"/>
</dbReference>
<dbReference type="NCBIfam" id="TIGR00231">
    <property type="entry name" value="small_GTP"/>
    <property type="match status" value="1"/>
</dbReference>
<dbReference type="PANTHER" id="PTHR43381:SF5">
    <property type="entry name" value="TR-TYPE G DOMAIN-CONTAINING PROTEIN"/>
    <property type="match status" value="1"/>
</dbReference>
<dbReference type="PANTHER" id="PTHR43381">
    <property type="entry name" value="TRANSLATION INITIATION FACTOR IF-2-RELATED"/>
    <property type="match status" value="1"/>
</dbReference>
<dbReference type="Pfam" id="PF22042">
    <property type="entry name" value="EF-G_D2"/>
    <property type="match status" value="1"/>
</dbReference>
<dbReference type="Pfam" id="PF00009">
    <property type="entry name" value="GTP_EFTU"/>
    <property type="match status" value="1"/>
</dbReference>
<dbReference type="Pfam" id="PF11987">
    <property type="entry name" value="IF-2"/>
    <property type="match status" value="1"/>
</dbReference>
<dbReference type="Pfam" id="PF04760">
    <property type="entry name" value="IF2_N"/>
    <property type="match status" value="2"/>
</dbReference>
<dbReference type="SUPFAM" id="SSF52156">
    <property type="entry name" value="Initiation factor IF2/eIF5b, domain 3"/>
    <property type="match status" value="1"/>
</dbReference>
<dbReference type="SUPFAM" id="SSF52540">
    <property type="entry name" value="P-loop containing nucleoside triphosphate hydrolases"/>
    <property type="match status" value="1"/>
</dbReference>
<dbReference type="SUPFAM" id="SSF50447">
    <property type="entry name" value="Translation proteins"/>
    <property type="match status" value="2"/>
</dbReference>
<dbReference type="PROSITE" id="PS51722">
    <property type="entry name" value="G_TR_2"/>
    <property type="match status" value="1"/>
</dbReference>
<dbReference type="PROSITE" id="PS01176">
    <property type="entry name" value="IF2"/>
    <property type="match status" value="1"/>
</dbReference>
<accession>B5E266</accession>
<comment type="function">
    <text evidence="2">One of the essential components for the initiation of protein synthesis. Protects formylmethionyl-tRNA from spontaneous hydrolysis and promotes its binding to the 30S ribosomal subunits. Also involved in the hydrolysis of GTP during the formation of the 70S ribosomal complex.</text>
</comment>
<comment type="subcellular location">
    <subcellularLocation>
        <location evidence="2">Cytoplasm</location>
    </subcellularLocation>
</comment>
<comment type="similarity">
    <text evidence="2">Belongs to the TRAFAC class translation factor GTPase superfamily. Classic translation factor GTPase family. IF-2 subfamily.</text>
</comment>
<sequence length="930" mass="102936">MSKKRLYEIAKELGKESKEVVARAKELGLDVKSHSSSVEEAVAAKIAASFKPAAAPKVEAKPAAPKVSAEKKAEKSEPAKPAVAKEEAKPAEPVAPKTEKVAAKPQSRNFKAEREARAKEQAERRKQNKGNNRDQQQNGNRQKNDGRNGGKQGQSNRDNRRFNDQAKKEQGQQKRRNERRQQEDKRSNQVAPRIDFKARAAALKAEQNAEYARSSEERFKQYQAAKEALAQANKRKEPEEIFEEAAKLAEQAQQVQAVVEVVPEKKEPAVDTRRKKQARPDKNRDDYDHEEDGPRKQQKNRSSQNQVRNQKNSNWNNNKKNKKGNNKNNRNQTPKPVTERKFHELPTEFEYTDGMTVAEIAKRIKREPAEIVKKLFMMGVMATQNQSLDGETIELLMVDYGIEAKQKVEVDNADIERFFVEDGYLNEDELVERPPVVTIMGHVDHGKTTLLDTLRNSRVATGEAGGITQHIGAYQIVENGKKITFLDTPGHAAFTSMRARGASVTDITILVVAADDGVMPQTIEAINHSKAANVPIIVAINKIDKPGANPERVIGELAEHGVMSTAWGGDSEFVEISAKFNQNIEELLETVLLVAEIQELKADPTVRAIGTVIEARLDKGKGAVATLLVQQGTLNVQDPIVVGNTFGRVRAMTNDLGRRVKVAGPSTPVSITGLNEAPMAGDHFAVYEDEKSARAAGEERAKRALMKQRQATQRVSLENLFDTLKAGELKSVNVIIKADVQGSVEALSASLQKIDVEGVKVTIVHSAVGAINESDVTLAEASNAFIVGFNVRPTPQARQQAEADDVEIRLHSIIYKVIEEMEEAMKGMLDPEFEEKVIGEAVIRETFKVSKVGTIGGFMVINGKVARDSKVRVIRDGVVIYDGELASLKHYKDDVKEVTNGREGGLMIDGYNDIKMDDVIEAYVMEEIKR</sequence>